<feature type="chain" id="PRO_1000195284" description="UPF0758 protein BCA_4566">
    <location>
        <begin position="1"/>
        <end position="225"/>
    </location>
</feature>
<feature type="domain" description="MPN" evidence="1">
    <location>
        <begin position="103"/>
        <end position="225"/>
    </location>
</feature>
<feature type="short sequence motif" description="JAMM motif" evidence="1">
    <location>
        <begin position="174"/>
        <end position="187"/>
    </location>
</feature>
<feature type="binding site" evidence="1">
    <location>
        <position position="174"/>
    </location>
    <ligand>
        <name>Zn(2+)</name>
        <dbReference type="ChEBI" id="CHEBI:29105"/>
        <note>catalytic</note>
    </ligand>
</feature>
<feature type="binding site" evidence="1">
    <location>
        <position position="176"/>
    </location>
    <ligand>
        <name>Zn(2+)</name>
        <dbReference type="ChEBI" id="CHEBI:29105"/>
        <note>catalytic</note>
    </ligand>
</feature>
<feature type="binding site" evidence="1">
    <location>
        <position position="187"/>
    </location>
    <ligand>
        <name>Zn(2+)</name>
        <dbReference type="ChEBI" id="CHEBI:29105"/>
        <note>catalytic</note>
    </ligand>
</feature>
<keyword id="KW-0378">Hydrolase</keyword>
<keyword id="KW-0479">Metal-binding</keyword>
<keyword id="KW-0482">Metalloprotease</keyword>
<keyword id="KW-0645">Protease</keyword>
<keyword id="KW-0862">Zinc</keyword>
<evidence type="ECO:0000255" key="1">
    <source>
        <dbReference type="PROSITE-ProRule" id="PRU01182"/>
    </source>
</evidence>
<evidence type="ECO:0000305" key="2"/>
<dbReference type="EMBL" id="CP001407">
    <property type="protein sequence ID" value="ACO27154.1"/>
    <property type="molecule type" value="Genomic_DNA"/>
</dbReference>
<dbReference type="SMR" id="C1ETQ0"/>
<dbReference type="KEGG" id="bcx:BCA_4566"/>
<dbReference type="PATRIC" id="fig|572264.18.peg.4514"/>
<dbReference type="Proteomes" id="UP000002210">
    <property type="component" value="Chromosome"/>
</dbReference>
<dbReference type="GO" id="GO:0046872">
    <property type="term" value="F:metal ion binding"/>
    <property type="evidence" value="ECO:0007669"/>
    <property type="project" value="UniProtKB-KW"/>
</dbReference>
<dbReference type="GO" id="GO:0008237">
    <property type="term" value="F:metallopeptidase activity"/>
    <property type="evidence" value="ECO:0007669"/>
    <property type="project" value="UniProtKB-KW"/>
</dbReference>
<dbReference type="GO" id="GO:0006508">
    <property type="term" value="P:proteolysis"/>
    <property type="evidence" value="ECO:0007669"/>
    <property type="project" value="UniProtKB-KW"/>
</dbReference>
<dbReference type="CDD" id="cd08071">
    <property type="entry name" value="MPN_DUF2466"/>
    <property type="match status" value="1"/>
</dbReference>
<dbReference type="Gene3D" id="3.40.140.10">
    <property type="entry name" value="Cytidine Deaminase, domain 2"/>
    <property type="match status" value="1"/>
</dbReference>
<dbReference type="InterPro" id="IPR037518">
    <property type="entry name" value="MPN"/>
</dbReference>
<dbReference type="InterPro" id="IPR025657">
    <property type="entry name" value="RadC_JAB"/>
</dbReference>
<dbReference type="InterPro" id="IPR010994">
    <property type="entry name" value="RuvA_2-like"/>
</dbReference>
<dbReference type="InterPro" id="IPR001405">
    <property type="entry name" value="UPF0758"/>
</dbReference>
<dbReference type="InterPro" id="IPR020891">
    <property type="entry name" value="UPF0758_CS"/>
</dbReference>
<dbReference type="InterPro" id="IPR046778">
    <property type="entry name" value="UPF0758_N"/>
</dbReference>
<dbReference type="NCBIfam" id="NF000642">
    <property type="entry name" value="PRK00024.1"/>
    <property type="match status" value="1"/>
</dbReference>
<dbReference type="NCBIfam" id="TIGR00608">
    <property type="entry name" value="radc"/>
    <property type="match status" value="1"/>
</dbReference>
<dbReference type="PANTHER" id="PTHR30471">
    <property type="entry name" value="DNA REPAIR PROTEIN RADC"/>
    <property type="match status" value="1"/>
</dbReference>
<dbReference type="PANTHER" id="PTHR30471:SF3">
    <property type="entry name" value="UPF0758 PROTEIN YEES-RELATED"/>
    <property type="match status" value="1"/>
</dbReference>
<dbReference type="Pfam" id="PF04002">
    <property type="entry name" value="RadC"/>
    <property type="match status" value="1"/>
</dbReference>
<dbReference type="Pfam" id="PF20582">
    <property type="entry name" value="UPF0758_N"/>
    <property type="match status" value="1"/>
</dbReference>
<dbReference type="SUPFAM" id="SSF102712">
    <property type="entry name" value="JAB1/MPN domain"/>
    <property type="match status" value="1"/>
</dbReference>
<dbReference type="SUPFAM" id="SSF47781">
    <property type="entry name" value="RuvA domain 2-like"/>
    <property type="match status" value="1"/>
</dbReference>
<dbReference type="PROSITE" id="PS50249">
    <property type="entry name" value="MPN"/>
    <property type="match status" value="1"/>
</dbReference>
<dbReference type="PROSITE" id="PS01302">
    <property type="entry name" value="UPF0758"/>
    <property type="match status" value="1"/>
</dbReference>
<proteinExistence type="inferred from homology"/>
<comment type="similarity">
    <text evidence="2">Belongs to the UPF0758 family.</text>
</comment>
<protein>
    <recommendedName>
        <fullName>UPF0758 protein BCA_4566</fullName>
    </recommendedName>
</protein>
<reference key="1">
    <citation type="submission" date="2009-02" db="EMBL/GenBank/DDBJ databases">
        <title>Genome sequence of Bacillus cereus 03BB102.</title>
        <authorList>
            <person name="Dodson R.J."/>
            <person name="Jackson P."/>
            <person name="Munk A.C."/>
            <person name="Brettin T."/>
            <person name="Bruce D."/>
            <person name="Detter C."/>
            <person name="Tapia R."/>
            <person name="Han C."/>
            <person name="Sutton G."/>
            <person name="Sims D."/>
        </authorList>
    </citation>
    <scope>NUCLEOTIDE SEQUENCE [LARGE SCALE GENOMIC DNA]</scope>
    <source>
        <strain>03BB102</strain>
    </source>
</reference>
<gene>
    <name type="ordered locus">BCA_4566</name>
</gene>
<sequence>MNGIRDVVKEEQPRERLLLEGAGSLSNRELLAVLLRTGSKEESVLKLSDKILHHFDGLRMLKDATLEELVSIHGVGVAKATQLIAAFELGRRMVRLEYQNRYSIRSPEDCATYMMEEMRFLQQEHFVCLYLNTKNQVIHRQTIFIGSLNSSIVHPREVFKEAFRRAAASIICLHNHPSGDPAPSREDIEVTKRLVECGRIIGIEVLDHIIIGDHKFVSLKEKGHI</sequence>
<name>Y4566_BACC3</name>
<accession>C1ETQ0</accession>
<organism>
    <name type="scientific">Bacillus cereus (strain 03BB102)</name>
    <dbReference type="NCBI Taxonomy" id="572264"/>
    <lineage>
        <taxon>Bacteria</taxon>
        <taxon>Bacillati</taxon>
        <taxon>Bacillota</taxon>
        <taxon>Bacilli</taxon>
        <taxon>Bacillales</taxon>
        <taxon>Bacillaceae</taxon>
        <taxon>Bacillus</taxon>
        <taxon>Bacillus cereus group</taxon>
    </lineage>
</organism>